<sequence>MNILSVASEVYPLVKTGGLADVVGALPSALLPHGVRTRTLVPGYPSVLKKLKKKKPVGRFDNLFGHPATVLAAEVNGVDLLVLDQPALYARDGGPYLDSTGRDYPDNFRRFAALSLAAAEIAGNGIIPNWKPDIVHVHDWQTALTPVYMRFGPAPDLPTVMTIHNIAFQGQFGASVFPELALPPDAFSTQFVEYYGDVGFLKGGLQTASAITTVSPSYAQEILTPEFGMGLDGLLSSRVADLTGIVNGIDGETWDPQTDPHIPAHYGPGTLKRRAGNRKALEERFGLEKGPGPIFCVISRLTWQKGMDLVAEAADDIVALGGKLVVLGSGDPALESALMAAASRNRGHIGMVTGYDEPLSHLMQAGADAILIPSRFEPCGLTQLYGLRYGCVPVVARTGGLTDTIIDANEAALSAKCATGFHFLPVTTDGLRLAIRRVLRAYNEPKLWARLQYQGMKSDVSWAKSAERYVSLYSALLAKG</sequence>
<organism>
    <name type="scientific">Rhizobium meliloti (strain 1021)</name>
    <name type="common">Ensifer meliloti</name>
    <name type="synonym">Sinorhizobium meliloti</name>
    <dbReference type="NCBI Taxonomy" id="266834"/>
    <lineage>
        <taxon>Bacteria</taxon>
        <taxon>Pseudomonadati</taxon>
        <taxon>Pseudomonadota</taxon>
        <taxon>Alphaproteobacteria</taxon>
        <taxon>Hyphomicrobiales</taxon>
        <taxon>Rhizobiaceae</taxon>
        <taxon>Sinorhizobium/Ensifer group</taxon>
        <taxon>Sinorhizobium</taxon>
    </lineage>
</organism>
<dbReference type="EC" id="2.4.1.21"/>
<dbReference type="EMBL" id="AL591688">
    <property type="protein sequence ID" value="CAC47425.1"/>
    <property type="molecule type" value="Genomic_DNA"/>
</dbReference>
<dbReference type="RefSeq" id="NP_386952.1">
    <property type="nucleotide sequence ID" value="NC_003047.1"/>
</dbReference>
<dbReference type="RefSeq" id="WP_010970235.1">
    <property type="nucleotide sequence ID" value="NC_003047.1"/>
</dbReference>
<dbReference type="SMR" id="P58393"/>
<dbReference type="CAZy" id="GT5">
    <property type="family name" value="Glycosyltransferase Family 5"/>
</dbReference>
<dbReference type="EnsemblBacteria" id="CAC47425">
    <property type="protein sequence ID" value="CAC47425"/>
    <property type="gene ID" value="SMc03924"/>
</dbReference>
<dbReference type="KEGG" id="sme:SMc03924"/>
<dbReference type="PATRIC" id="fig|266834.11.peg.4366"/>
<dbReference type="eggNOG" id="COG0297">
    <property type="taxonomic scope" value="Bacteria"/>
</dbReference>
<dbReference type="HOGENOM" id="CLU_009583_18_4_5"/>
<dbReference type="OrthoDB" id="9808590at2"/>
<dbReference type="UniPathway" id="UPA00164"/>
<dbReference type="Proteomes" id="UP000001976">
    <property type="component" value="Chromosome"/>
</dbReference>
<dbReference type="GO" id="GO:0005829">
    <property type="term" value="C:cytosol"/>
    <property type="evidence" value="ECO:0007669"/>
    <property type="project" value="TreeGrafter"/>
</dbReference>
<dbReference type="GO" id="GO:0009011">
    <property type="term" value="F:alpha-1,4-glucan glucosyltransferase (ADP-glucose donor) activity"/>
    <property type="evidence" value="ECO:0007669"/>
    <property type="project" value="UniProtKB-UniRule"/>
</dbReference>
<dbReference type="GO" id="GO:0004373">
    <property type="term" value="F:alpha-1,4-glucan glucosyltransferase (UDP-glucose donor) activity"/>
    <property type="evidence" value="ECO:0007669"/>
    <property type="project" value="InterPro"/>
</dbReference>
<dbReference type="GO" id="GO:0005978">
    <property type="term" value="P:glycogen biosynthetic process"/>
    <property type="evidence" value="ECO:0007669"/>
    <property type="project" value="UniProtKB-UniRule"/>
</dbReference>
<dbReference type="CDD" id="cd03791">
    <property type="entry name" value="GT5_Glycogen_synthase_DULL1-like"/>
    <property type="match status" value="1"/>
</dbReference>
<dbReference type="Gene3D" id="3.40.50.2000">
    <property type="entry name" value="Glycogen Phosphorylase B"/>
    <property type="match status" value="2"/>
</dbReference>
<dbReference type="HAMAP" id="MF_00484">
    <property type="entry name" value="Glycogen_synth"/>
    <property type="match status" value="1"/>
</dbReference>
<dbReference type="InterPro" id="IPR001296">
    <property type="entry name" value="Glyco_trans_1"/>
</dbReference>
<dbReference type="InterPro" id="IPR011835">
    <property type="entry name" value="GS/SS"/>
</dbReference>
<dbReference type="InterPro" id="IPR013534">
    <property type="entry name" value="Starch_synth_cat_dom"/>
</dbReference>
<dbReference type="NCBIfam" id="TIGR02095">
    <property type="entry name" value="glgA"/>
    <property type="match status" value="1"/>
</dbReference>
<dbReference type="NCBIfam" id="NF001899">
    <property type="entry name" value="PRK00654.1-2"/>
    <property type="match status" value="1"/>
</dbReference>
<dbReference type="PANTHER" id="PTHR45825:SF11">
    <property type="entry name" value="ALPHA AMYLASE DOMAIN-CONTAINING PROTEIN"/>
    <property type="match status" value="1"/>
</dbReference>
<dbReference type="PANTHER" id="PTHR45825">
    <property type="entry name" value="GRANULE-BOUND STARCH SYNTHASE 1, CHLOROPLASTIC/AMYLOPLASTIC"/>
    <property type="match status" value="1"/>
</dbReference>
<dbReference type="Pfam" id="PF08323">
    <property type="entry name" value="Glyco_transf_5"/>
    <property type="match status" value="1"/>
</dbReference>
<dbReference type="Pfam" id="PF00534">
    <property type="entry name" value="Glycos_transf_1"/>
    <property type="match status" value="1"/>
</dbReference>
<dbReference type="SUPFAM" id="SSF53756">
    <property type="entry name" value="UDP-Glycosyltransferase/glycogen phosphorylase"/>
    <property type="match status" value="1"/>
</dbReference>
<comment type="function">
    <text evidence="1">Synthesizes alpha-1,4-glucan chains using ADP-glucose.</text>
</comment>
<comment type="catalytic activity">
    <reaction>
        <text>[(1-&gt;4)-alpha-D-glucosyl](n) + ADP-alpha-D-glucose = [(1-&gt;4)-alpha-D-glucosyl](n+1) + ADP + H(+)</text>
        <dbReference type="Rhea" id="RHEA:18189"/>
        <dbReference type="Rhea" id="RHEA-COMP:9584"/>
        <dbReference type="Rhea" id="RHEA-COMP:9587"/>
        <dbReference type="ChEBI" id="CHEBI:15378"/>
        <dbReference type="ChEBI" id="CHEBI:15444"/>
        <dbReference type="ChEBI" id="CHEBI:57498"/>
        <dbReference type="ChEBI" id="CHEBI:456216"/>
        <dbReference type="EC" id="2.4.1.21"/>
    </reaction>
</comment>
<comment type="pathway">
    <text>Glycan biosynthesis; glycogen biosynthesis.</text>
</comment>
<comment type="similarity">
    <text evidence="2">Belongs to the glycosyltransferase 1 family. Bacterial/plant glycogen synthase subfamily.</text>
</comment>
<proteinExistence type="inferred from homology"/>
<keyword id="KW-0320">Glycogen biosynthesis</keyword>
<keyword id="KW-0328">Glycosyltransferase</keyword>
<keyword id="KW-1185">Reference proteome</keyword>
<keyword id="KW-0808">Transferase</keyword>
<reference key="1">
    <citation type="journal article" date="2001" name="Proc. Natl. Acad. Sci. U.S.A.">
        <title>Analysis of the chromosome sequence of the legume symbiont Sinorhizobium meliloti strain 1021.</title>
        <authorList>
            <person name="Capela D."/>
            <person name="Barloy-Hubler F."/>
            <person name="Gouzy J."/>
            <person name="Bothe G."/>
            <person name="Ampe F."/>
            <person name="Batut J."/>
            <person name="Boistard P."/>
            <person name="Becker A."/>
            <person name="Boutry M."/>
            <person name="Cadieu E."/>
            <person name="Dreano S."/>
            <person name="Gloux S."/>
            <person name="Godrie T."/>
            <person name="Goffeau A."/>
            <person name="Kahn D."/>
            <person name="Kiss E."/>
            <person name="Lelaure V."/>
            <person name="Masuy D."/>
            <person name="Pohl T."/>
            <person name="Portetelle D."/>
            <person name="Puehler A."/>
            <person name="Purnelle B."/>
            <person name="Ramsperger U."/>
            <person name="Renard C."/>
            <person name="Thebault P."/>
            <person name="Vandenbol M."/>
            <person name="Weidner S."/>
            <person name="Galibert F."/>
        </authorList>
    </citation>
    <scope>NUCLEOTIDE SEQUENCE [LARGE SCALE GENOMIC DNA]</scope>
    <source>
        <strain>1021</strain>
    </source>
</reference>
<reference key="2">
    <citation type="journal article" date="2001" name="Science">
        <title>The composite genome of the legume symbiont Sinorhizobium meliloti.</title>
        <authorList>
            <person name="Galibert F."/>
            <person name="Finan T.M."/>
            <person name="Long S.R."/>
            <person name="Puehler A."/>
            <person name="Abola P."/>
            <person name="Ampe F."/>
            <person name="Barloy-Hubler F."/>
            <person name="Barnett M.J."/>
            <person name="Becker A."/>
            <person name="Boistard P."/>
            <person name="Bothe G."/>
            <person name="Boutry M."/>
            <person name="Bowser L."/>
            <person name="Buhrmester J."/>
            <person name="Cadieu E."/>
            <person name="Capela D."/>
            <person name="Chain P."/>
            <person name="Cowie A."/>
            <person name="Davis R.W."/>
            <person name="Dreano S."/>
            <person name="Federspiel N.A."/>
            <person name="Fisher R.F."/>
            <person name="Gloux S."/>
            <person name="Godrie T."/>
            <person name="Goffeau A."/>
            <person name="Golding B."/>
            <person name="Gouzy J."/>
            <person name="Gurjal M."/>
            <person name="Hernandez-Lucas I."/>
            <person name="Hong A."/>
            <person name="Huizar L."/>
            <person name="Hyman R.W."/>
            <person name="Jones T."/>
            <person name="Kahn D."/>
            <person name="Kahn M.L."/>
            <person name="Kalman S."/>
            <person name="Keating D.H."/>
            <person name="Kiss E."/>
            <person name="Komp C."/>
            <person name="Lelaure V."/>
            <person name="Masuy D."/>
            <person name="Palm C."/>
            <person name="Peck M.C."/>
            <person name="Pohl T.M."/>
            <person name="Portetelle D."/>
            <person name="Purnelle B."/>
            <person name="Ramsperger U."/>
            <person name="Surzycki R."/>
            <person name="Thebault P."/>
            <person name="Vandenbol M."/>
            <person name="Vorhoelter F.J."/>
            <person name="Weidner S."/>
            <person name="Wells D.H."/>
            <person name="Wong K."/>
            <person name="Yeh K.-C."/>
            <person name="Batut J."/>
        </authorList>
    </citation>
    <scope>NUCLEOTIDE SEQUENCE [LARGE SCALE GENOMIC DNA]</scope>
    <source>
        <strain>1021</strain>
    </source>
</reference>
<gene>
    <name type="primary">glgA1</name>
    <name type="ordered locus">R02846</name>
    <name type="ORF">SMc03924</name>
</gene>
<accession>P58393</accession>
<evidence type="ECO:0000250" key="1"/>
<evidence type="ECO:0000305" key="2"/>
<protein>
    <recommendedName>
        <fullName>Glycogen synthase 1</fullName>
        <ecNumber>2.4.1.21</ecNumber>
    </recommendedName>
    <alternativeName>
        <fullName>Starch [bacterial glycogen] synthase 1</fullName>
    </alternativeName>
</protein>
<name>GLGA1_RHIME</name>
<feature type="chain" id="PRO_0000188637" description="Glycogen synthase 1">
    <location>
        <begin position="1"/>
        <end position="480"/>
    </location>
</feature>
<feature type="binding site" evidence="1">
    <location>
        <position position="15"/>
    </location>
    <ligand>
        <name>ADP-alpha-D-glucose</name>
        <dbReference type="ChEBI" id="CHEBI:57498"/>
    </ligand>
</feature>